<protein>
    <recommendedName>
        <fullName>Protein FDD123</fullName>
    </recommendedName>
    <alternativeName>
        <fullName>CvHSP30/1</fullName>
    </alternativeName>
</protein>
<proteinExistence type="evidence at transcript level"/>
<gene>
    <name type="primary">FDD123</name>
</gene>
<dbReference type="EMBL" id="AB003518">
    <property type="protein sequence ID" value="BAA33053.1"/>
    <property type="molecule type" value="mRNA"/>
</dbReference>
<dbReference type="EMBL" id="AB018406">
    <property type="protein sequence ID" value="BAA76590.1"/>
    <property type="molecule type" value="mRNA"/>
</dbReference>
<dbReference type="SMR" id="O74631"/>
<dbReference type="TCDB" id="3.E.1.4.9">
    <property type="family name" value="the ion-translocating microbial rhodopsin (mr) family"/>
</dbReference>
<dbReference type="GO" id="GO:0005783">
    <property type="term" value="C:endoplasmic reticulum"/>
    <property type="evidence" value="ECO:0007669"/>
    <property type="project" value="TreeGrafter"/>
</dbReference>
<dbReference type="GO" id="GO:0005886">
    <property type="term" value="C:plasma membrane"/>
    <property type="evidence" value="ECO:0007669"/>
    <property type="project" value="TreeGrafter"/>
</dbReference>
<dbReference type="CDD" id="cd15239">
    <property type="entry name" value="7tm_YRO2_fungal-like"/>
    <property type="match status" value="1"/>
</dbReference>
<dbReference type="FunFam" id="1.20.1070.10:FF:000160">
    <property type="entry name" value="Related to Opsin-1"/>
    <property type="match status" value="1"/>
</dbReference>
<dbReference type="Gene3D" id="1.20.1070.10">
    <property type="entry name" value="Rhodopsin 7-helix transmembrane proteins"/>
    <property type="match status" value="1"/>
</dbReference>
<dbReference type="InterPro" id="IPR001425">
    <property type="entry name" value="Arc/bac/fun_rhodopsins"/>
</dbReference>
<dbReference type="InterPro" id="IPR043476">
    <property type="entry name" value="Yro2-like_7TM"/>
</dbReference>
<dbReference type="PANTHER" id="PTHR28286">
    <property type="match status" value="1"/>
</dbReference>
<dbReference type="PANTHER" id="PTHR28286:SF1">
    <property type="entry name" value="30 KDA HEAT SHOCK PROTEIN-RELATED"/>
    <property type="match status" value="1"/>
</dbReference>
<dbReference type="Pfam" id="PF01036">
    <property type="entry name" value="Bac_rhodopsin"/>
    <property type="match status" value="1"/>
</dbReference>
<dbReference type="PRINTS" id="PR00251">
    <property type="entry name" value="BACTRLOPSIN"/>
</dbReference>
<dbReference type="SMART" id="SM01021">
    <property type="entry name" value="Bac_rhodopsin"/>
    <property type="match status" value="1"/>
</dbReference>
<dbReference type="SUPFAM" id="SSF81321">
    <property type="entry name" value="Family A G protein-coupled receptor-like"/>
    <property type="match status" value="1"/>
</dbReference>
<comment type="subcellular location">
    <subcellularLocation>
        <location evidence="2">Membrane</location>
        <topology evidence="2">Multi-pass membrane protein</topology>
    </subcellularLocation>
</comment>
<comment type="similarity">
    <text evidence="2">Belongs to the archaeal/bacterial/fungal opsin family.</text>
</comment>
<comment type="caution">
    <text evidence="2">Lacks the conserved Lys residue in position 228 required for covalent retinal binding.</text>
</comment>
<sequence>MGNSALDLNPPNATFHLSTHGSDWLWAAFSVFGVSLLTVVAWTFTRPRGARLFHQIAIVVLTTGSLAYFSMASDLGATPVPVEFRGEGTRQIWFVRYIQWFITFPLLLLELLLATGLSLSDIFTTLFMSIVLVITGLVAALVPSTYKWGYYTFGVSALFYIWYVLLWHGPHTTFAAGGVLRRGYILAAGYLSFLLLLYPIAWACAEGGNVISVTSEMIWYGILDIFAGPIFLFFFLWELRGVDYATFGLHSGKYTDKSAYAPNTAQAAGTVPATTSTGAAGNV</sequence>
<feature type="chain" id="PRO_0000196287" description="Protein FDD123">
    <location>
        <begin position="1"/>
        <end position="283"/>
    </location>
</feature>
<feature type="transmembrane region" description="Helical" evidence="1">
    <location>
        <begin position="24"/>
        <end position="44"/>
    </location>
</feature>
<feature type="transmembrane region" description="Helical" evidence="1">
    <location>
        <begin position="52"/>
        <end position="72"/>
    </location>
</feature>
<feature type="transmembrane region" description="Helical" evidence="1">
    <location>
        <begin position="97"/>
        <end position="117"/>
    </location>
</feature>
<feature type="transmembrane region" description="Helical" evidence="1">
    <location>
        <begin position="122"/>
        <end position="142"/>
    </location>
</feature>
<feature type="transmembrane region" description="Helical" evidence="1">
    <location>
        <begin position="148"/>
        <end position="168"/>
    </location>
</feature>
<feature type="transmembrane region" description="Helical" evidence="1">
    <location>
        <begin position="185"/>
        <end position="205"/>
    </location>
</feature>
<feature type="transmembrane region" description="Helical" evidence="1">
    <location>
        <begin position="217"/>
        <end position="237"/>
    </location>
</feature>
<evidence type="ECO:0000255" key="1"/>
<evidence type="ECO:0000305" key="2"/>
<reference key="1">
    <citation type="journal article" date="1997" name="FEBS Lett.">
        <title>Isolation of mRNAs induced by a hazardous chemical in white-rot fungus, Coriolus versicolor, by differential display.</title>
        <authorList>
            <person name="Iimura Y."/>
            <person name="Tatsumi K."/>
        </authorList>
    </citation>
    <scope>NUCLEOTIDE SEQUENCE [MRNA]</scope>
    <source>
        <strain>ATCC 62976 / IAM 13013 / NBRC 30340 / FES 1030 / Ps-4a</strain>
    </source>
</reference>
<organism>
    <name type="scientific">Trametes versicolor</name>
    <name type="common">White-rot fungus</name>
    <name type="synonym">Coriolus versicolor</name>
    <dbReference type="NCBI Taxonomy" id="5325"/>
    <lineage>
        <taxon>Eukaryota</taxon>
        <taxon>Fungi</taxon>
        <taxon>Dikarya</taxon>
        <taxon>Basidiomycota</taxon>
        <taxon>Agaricomycotina</taxon>
        <taxon>Agaricomycetes</taxon>
        <taxon>Polyporales</taxon>
        <taxon>Polyporaceae</taxon>
        <taxon>Trametes</taxon>
    </lineage>
</organism>
<accession>O74631</accession>
<keyword id="KW-0472">Membrane</keyword>
<keyword id="KW-0812">Transmembrane</keyword>
<keyword id="KW-1133">Transmembrane helix</keyword>
<name>FD123_TRAVE</name>